<keyword id="KW-0028">Amino-acid biosynthesis</keyword>
<keyword id="KW-0057">Aromatic amino acid biosynthesis</keyword>
<keyword id="KW-0170">Cobalt</keyword>
<keyword id="KW-0963">Cytoplasm</keyword>
<keyword id="KW-0456">Lyase</keyword>
<keyword id="KW-0479">Metal-binding</keyword>
<keyword id="KW-0520">NAD</keyword>
<keyword id="KW-0547">Nucleotide-binding</keyword>
<keyword id="KW-0862">Zinc</keyword>
<reference key="1">
    <citation type="journal article" date="2006" name="PLoS Genet.">
        <title>Secrets of soil survival revealed by the genome sequence of Arthrobacter aurescens TC1.</title>
        <authorList>
            <person name="Mongodin E.F."/>
            <person name="Shapir N."/>
            <person name="Daugherty S.C."/>
            <person name="DeBoy R.T."/>
            <person name="Emerson J.B."/>
            <person name="Shvartzbeyn A."/>
            <person name="Radune D."/>
            <person name="Vamathevan J."/>
            <person name="Riggs F."/>
            <person name="Grinberg V."/>
            <person name="Khouri H.M."/>
            <person name="Wackett L.P."/>
            <person name="Nelson K.E."/>
            <person name="Sadowsky M.J."/>
        </authorList>
    </citation>
    <scope>NUCLEOTIDE SEQUENCE [LARGE SCALE GENOMIC DNA]</scope>
    <source>
        <strain>TC1</strain>
    </source>
</reference>
<feature type="chain" id="PRO_1000094452" description="3-dehydroquinate synthase">
    <location>
        <begin position="1"/>
        <end position="363"/>
    </location>
</feature>
<feature type="binding site" evidence="1">
    <location>
        <begin position="75"/>
        <end position="80"/>
    </location>
    <ligand>
        <name>NAD(+)</name>
        <dbReference type="ChEBI" id="CHEBI:57540"/>
    </ligand>
</feature>
<feature type="binding site" evidence="1">
    <location>
        <begin position="109"/>
        <end position="113"/>
    </location>
    <ligand>
        <name>NAD(+)</name>
        <dbReference type="ChEBI" id="CHEBI:57540"/>
    </ligand>
</feature>
<feature type="binding site" evidence="1">
    <location>
        <begin position="133"/>
        <end position="134"/>
    </location>
    <ligand>
        <name>NAD(+)</name>
        <dbReference type="ChEBI" id="CHEBI:57540"/>
    </ligand>
</feature>
<feature type="binding site" evidence="1">
    <location>
        <position position="146"/>
    </location>
    <ligand>
        <name>NAD(+)</name>
        <dbReference type="ChEBI" id="CHEBI:57540"/>
    </ligand>
</feature>
<feature type="binding site" evidence="1">
    <location>
        <position position="155"/>
    </location>
    <ligand>
        <name>NAD(+)</name>
        <dbReference type="ChEBI" id="CHEBI:57540"/>
    </ligand>
</feature>
<feature type="binding site" evidence="1">
    <location>
        <begin position="173"/>
        <end position="176"/>
    </location>
    <ligand>
        <name>NAD(+)</name>
        <dbReference type="ChEBI" id="CHEBI:57540"/>
    </ligand>
</feature>
<feature type="binding site" evidence="1">
    <location>
        <position position="188"/>
    </location>
    <ligand>
        <name>Zn(2+)</name>
        <dbReference type="ChEBI" id="CHEBI:29105"/>
    </ligand>
</feature>
<feature type="binding site" evidence="1">
    <location>
        <position position="251"/>
    </location>
    <ligand>
        <name>Zn(2+)</name>
        <dbReference type="ChEBI" id="CHEBI:29105"/>
    </ligand>
</feature>
<feature type="binding site" evidence="1">
    <location>
        <position position="267"/>
    </location>
    <ligand>
        <name>Zn(2+)</name>
        <dbReference type="ChEBI" id="CHEBI:29105"/>
    </ligand>
</feature>
<protein>
    <recommendedName>
        <fullName evidence="1">3-dehydroquinate synthase</fullName>
        <shortName evidence="1">DHQS</shortName>
        <ecNumber evidence="1">4.2.3.4</ecNumber>
    </recommendedName>
</protein>
<proteinExistence type="inferred from homology"/>
<evidence type="ECO:0000255" key="1">
    <source>
        <dbReference type="HAMAP-Rule" id="MF_00110"/>
    </source>
</evidence>
<sequence>MSNEATVIKVTGQSVNENYDVVVGRGLLDTLPAKLGERVRRVLVIHPRALRLTGDTVRDELEAAGFTALTAEIPDAEEGKHIQVAAFCWQVLGQNDFTRSDAIVAVGGGAVTDLAGFVAATWLRGVKVIHMPTSLLGMVDASVGGKTGINTAEGKNLVGSFHPPAAVLADLDTLQTLPKNELISGMAEVIKCGFIADPAILDLVEKNTDAVMDPGSDVVRELIERAISVKADVVSQDLKESGLREILNYGHTLGHAIELVERYSWRHGAAVSVGMMFAAELSRSVGRLSDADADRHRTILESLGLPITYRRDRWQGLLDGMRRDKKSRGDLLRFVVLDGVAKPGILEVPDTSLLFAAYQEIAS</sequence>
<accession>A1R703</accession>
<name>AROB_PAEAT</name>
<dbReference type="EC" id="4.2.3.4" evidence="1"/>
<dbReference type="EMBL" id="CP000474">
    <property type="protein sequence ID" value="ABM06788.1"/>
    <property type="molecule type" value="Genomic_DNA"/>
</dbReference>
<dbReference type="RefSeq" id="WP_011774959.1">
    <property type="nucleotide sequence ID" value="NC_008711.1"/>
</dbReference>
<dbReference type="SMR" id="A1R703"/>
<dbReference type="STRING" id="290340.AAur_2275"/>
<dbReference type="KEGG" id="aau:AAur_2275"/>
<dbReference type="eggNOG" id="COG0337">
    <property type="taxonomic scope" value="Bacteria"/>
</dbReference>
<dbReference type="HOGENOM" id="CLU_001201_0_3_11"/>
<dbReference type="OrthoDB" id="9806583at2"/>
<dbReference type="UniPathway" id="UPA00053">
    <property type="reaction ID" value="UER00085"/>
</dbReference>
<dbReference type="Proteomes" id="UP000000637">
    <property type="component" value="Chromosome"/>
</dbReference>
<dbReference type="GO" id="GO:0005737">
    <property type="term" value="C:cytoplasm"/>
    <property type="evidence" value="ECO:0007669"/>
    <property type="project" value="UniProtKB-SubCell"/>
</dbReference>
<dbReference type="GO" id="GO:0003856">
    <property type="term" value="F:3-dehydroquinate synthase activity"/>
    <property type="evidence" value="ECO:0007669"/>
    <property type="project" value="UniProtKB-UniRule"/>
</dbReference>
<dbReference type="GO" id="GO:0046872">
    <property type="term" value="F:metal ion binding"/>
    <property type="evidence" value="ECO:0007669"/>
    <property type="project" value="UniProtKB-KW"/>
</dbReference>
<dbReference type="GO" id="GO:0000166">
    <property type="term" value="F:nucleotide binding"/>
    <property type="evidence" value="ECO:0007669"/>
    <property type="project" value="UniProtKB-KW"/>
</dbReference>
<dbReference type="GO" id="GO:0008652">
    <property type="term" value="P:amino acid biosynthetic process"/>
    <property type="evidence" value="ECO:0007669"/>
    <property type="project" value="UniProtKB-KW"/>
</dbReference>
<dbReference type="GO" id="GO:0009073">
    <property type="term" value="P:aromatic amino acid family biosynthetic process"/>
    <property type="evidence" value="ECO:0007669"/>
    <property type="project" value="UniProtKB-KW"/>
</dbReference>
<dbReference type="GO" id="GO:0009423">
    <property type="term" value="P:chorismate biosynthetic process"/>
    <property type="evidence" value="ECO:0007669"/>
    <property type="project" value="UniProtKB-UniRule"/>
</dbReference>
<dbReference type="CDD" id="cd08195">
    <property type="entry name" value="DHQS"/>
    <property type="match status" value="1"/>
</dbReference>
<dbReference type="FunFam" id="3.40.50.1970:FF:000012">
    <property type="entry name" value="3-dehydroquinate synthase"/>
    <property type="match status" value="1"/>
</dbReference>
<dbReference type="Gene3D" id="3.40.50.1970">
    <property type="match status" value="1"/>
</dbReference>
<dbReference type="Gene3D" id="1.20.1090.10">
    <property type="entry name" value="Dehydroquinate synthase-like - alpha domain"/>
    <property type="match status" value="1"/>
</dbReference>
<dbReference type="HAMAP" id="MF_00110">
    <property type="entry name" value="DHQ_synthase"/>
    <property type="match status" value="1"/>
</dbReference>
<dbReference type="InterPro" id="IPR050071">
    <property type="entry name" value="Dehydroquinate_synthase"/>
</dbReference>
<dbReference type="InterPro" id="IPR016037">
    <property type="entry name" value="DHQ_synth_AroB"/>
</dbReference>
<dbReference type="InterPro" id="IPR030963">
    <property type="entry name" value="DHQ_synth_fam"/>
</dbReference>
<dbReference type="InterPro" id="IPR030960">
    <property type="entry name" value="DHQS/DOIS_N"/>
</dbReference>
<dbReference type="InterPro" id="IPR056179">
    <property type="entry name" value="DHQS_C"/>
</dbReference>
<dbReference type="NCBIfam" id="TIGR01357">
    <property type="entry name" value="aroB"/>
    <property type="match status" value="1"/>
</dbReference>
<dbReference type="PANTHER" id="PTHR43622">
    <property type="entry name" value="3-DEHYDROQUINATE SYNTHASE"/>
    <property type="match status" value="1"/>
</dbReference>
<dbReference type="PANTHER" id="PTHR43622:SF7">
    <property type="entry name" value="3-DEHYDROQUINATE SYNTHASE, CHLOROPLASTIC"/>
    <property type="match status" value="1"/>
</dbReference>
<dbReference type="Pfam" id="PF01761">
    <property type="entry name" value="DHQ_synthase"/>
    <property type="match status" value="1"/>
</dbReference>
<dbReference type="Pfam" id="PF24621">
    <property type="entry name" value="DHQS_C"/>
    <property type="match status" value="1"/>
</dbReference>
<dbReference type="PIRSF" id="PIRSF001455">
    <property type="entry name" value="DHQ_synth"/>
    <property type="match status" value="1"/>
</dbReference>
<dbReference type="SUPFAM" id="SSF56796">
    <property type="entry name" value="Dehydroquinate synthase-like"/>
    <property type="match status" value="1"/>
</dbReference>
<gene>
    <name evidence="1" type="primary">aroB</name>
    <name type="ordered locus">AAur_2275</name>
</gene>
<organism>
    <name type="scientific">Paenarthrobacter aurescens (strain TC1)</name>
    <dbReference type="NCBI Taxonomy" id="290340"/>
    <lineage>
        <taxon>Bacteria</taxon>
        <taxon>Bacillati</taxon>
        <taxon>Actinomycetota</taxon>
        <taxon>Actinomycetes</taxon>
        <taxon>Micrococcales</taxon>
        <taxon>Micrococcaceae</taxon>
        <taxon>Paenarthrobacter</taxon>
    </lineage>
</organism>
<comment type="function">
    <text evidence="1">Catalyzes the conversion of 3-deoxy-D-arabino-heptulosonate 7-phosphate (DAHP) to dehydroquinate (DHQ).</text>
</comment>
<comment type="catalytic activity">
    <reaction evidence="1">
        <text>7-phospho-2-dehydro-3-deoxy-D-arabino-heptonate = 3-dehydroquinate + phosphate</text>
        <dbReference type="Rhea" id="RHEA:21968"/>
        <dbReference type="ChEBI" id="CHEBI:32364"/>
        <dbReference type="ChEBI" id="CHEBI:43474"/>
        <dbReference type="ChEBI" id="CHEBI:58394"/>
        <dbReference type="EC" id="4.2.3.4"/>
    </reaction>
</comment>
<comment type="cofactor">
    <cofactor evidence="1">
        <name>Co(2+)</name>
        <dbReference type="ChEBI" id="CHEBI:48828"/>
    </cofactor>
    <cofactor evidence="1">
        <name>Zn(2+)</name>
        <dbReference type="ChEBI" id="CHEBI:29105"/>
    </cofactor>
    <text evidence="1">Binds 1 divalent metal cation per subunit. Can use either Co(2+) or Zn(2+).</text>
</comment>
<comment type="cofactor">
    <cofactor evidence="1">
        <name>NAD(+)</name>
        <dbReference type="ChEBI" id="CHEBI:57540"/>
    </cofactor>
</comment>
<comment type="pathway">
    <text evidence="1">Metabolic intermediate biosynthesis; chorismate biosynthesis; chorismate from D-erythrose 4-phosphate and phosphoenolpyruvate: step 2/7.</text>
</comment>
<comment type="subcellular location">
    <subcellularLocation>
        <location evidence="1">Cytoplasm</location>
    </subcellularLocation>
</comment>
<comment type="similarity">
    <text evidence="1">Belongs to the sugar phosphate cyclases superfamily. Dehydroquinate synthase family.</text>
</comment>